<accession>C0PYL4</accession>
<organism>
    <name type="scientific">Salmonella paratyphi C (strain RKS4594)</name>
    <dbReference type="NCBI Taxonomy" id="476213"/>
    <lineage>
        <taxon>Bacteria</taxon>
        <taxon>Pseudomonadati</taxon>
        <taxon>Pseudomonadota</taxon>
        <taxon>Gammaproteobacteria</taxon>
        <taxon>Enterobacterales</taxon>
        <taxon>Enterobacteriaceae</taxon>
        <taxon>Salmonella</taxon>
    </lineage>
</organism>
<reference key="1">
    <citation type="journal article" date="2009" name="PLoS ONE">
        <title>Salmonella paratyphi C: genetic divergence from Salmonella choleraesuis and pathogenic convergence with Salmonella typhi.</title>
        <authorList>
            <person name="Liu W.-Q."/>
            <person name="Feng Y."/>
            <person name="Wang Y."/>
            <person name="Zou Q.-H."/>
            <person name="Chen F."/>
            <person name="Guo J.-T."/>
            <person name="Peng Y.-H."/>
            <person name="Jin Y."/>
            <person name="Li Y.-G."/>
            <person name="Hu S.-N."/>
            <person name="Johnston R.N."/>
            <person name="Liu G.-R."/>
            <person name="Liu S.-L."/>
        </authorList>
    </citation>
    <scope>NUCLEOTIDE SEQUENCE [LARGE SCALE GENOMIC DNA]</scope>
    <source>
        <strain>RKS4594</strain>
    </source>
</reference>
<sequence length="427" mass="46355">MTEAMKITLSTQPADARWGDKATYSINNDGITLHLNGKDDLGLIQRAARKIDGLGIKQVALTGEGWDTERCWAFWAGYKGPKGVRTVMWPDLDDAQRQELDNRLTIIDWVRDTINAPAEELGPEQLAQRAVDLLCSVACDSVTYRITKGEDLREQNYMGLHTVGRGSERPPVLLALDYNPTGDKDAPVYACLVGKGITFDSGGYSIKQSAFMDSMKSDMGGAATVTGALAFAITRGLNKRVKLFLCCADNLISGNAFKLGDIIRYRNGKNVEVMNTDAEGRLVLADGLIDASAQHPQLIIDMATLTGAAKTALGNDYHALFSFDDTLAGRLLTSAAQENEPFWRLPLAEFHRNQLPSNFAELNNTGSAAYPAGASTAAGFLSHFVENYREGWLHIDCSATYRKAPVEQWAAGATGLGVRTIANLLTA</sequence>
<dbReference type="EC" id="3.4.11.23" evidence="1"/>
<dbReference type="EMBL" id="CP000857">
    <property type="protein sequence ID" value="ACN45281.1"/>
    <property type="molecule type" value="Genomic_DNA"/>
</dbReference>
<dbReference type="RefSeq" id="WP_000133541.1">
    <property type="nucleotide sequence ID" value="NC_012125.1"/>
</dbReference>
<dbReference type="SMR" id="C0PYL4"/>
<dbReference type="MEROPS" id="M17.004"/>
<dbReference type="KEGG" id="sei:SPC_1115"/>
<dbReference type="HOGENOM" id="CLU_013734_7_1_6"/>
<dbReference type="Proteomes" id="UP000001599">
    <property type="component" value="Chromosome"/>
</dbReference>
<dbReference type="GO" id="GO:0005737">
    <property type="term" value="C:cytoplasm"/>
    <property type="evidence" value="ECO:0007669"/>
    <property type="project" value="UniProtKB-SubCell"/>
</dbReference>
<dbReference type="GO" id="GO:0030145">
    <property type="term" value="F:manganese ion binding"/>
    <property type="evidence" value="ECO:0007669"/>
    <property type="project" value="UniProtKB-UniRule"/>
</dbReference>
<dbReference type="GO" id="GO:0070006">
    <property type="term" value="F:metalloaminopeptidase activity"/>
    <property type="evidence" value="ECO:0007669"/>
    <property type="project" value="InterPro"/>
</dbReference>
<dbReference type="GO" id="GO:0006508">
    <property type="term" value="P:proteolysis"/>
    <property type="evidence" value="ECO:0007669"/>
    <property type="project" value="UniProtKB-UniRule"/>
</dbReference>
<dbReference type="CDD" id="cd00433">
    <property type="entry name" value="Peptidase_M17"/>
    <property type="match status" value="1"/>
</dbReference>
<dbReference type="FunFam" id="3.40.630.10:FF:000037">
    <property type="entry name" value="Peptidase B"/>
    <property type="match status" value="1"/>
</dbReference>
<dbReference type="Gene3D" id="3.40.630.10">
    <property type="entry name" value="Zn peptidases"/>
    <property type="match status" value="1"/>
</dbReference>
<dbReference type="HAMAP" id="MF_00504">
    <property type="entry name" value="Aminopeptidase_M17"/>
    <property type="match status" value="1"/>
</dbReference>
<dbReference type="InterPro" id="IPR011356">
    <property type="entry name" value="Leucine_aapep/pepB"/>
</dbReference>
<dbReference type="InterPro" id="IPR047620">
    <property type="entry name" value="M17_PepB-like_N"/>
</dbReference>
<dbReference type="InterPro" id="IPR008330">
    <property type="entry name" value="Pept_M17_PepB"/>
</dbReference>
<dbReference type="InterPro" id="IPR000819">
    <property type="entry name" value="Peptidase_M17_C"/>
</dbReference>
<dbReference type="NCBIfam" id="NF003450">
    <property type="entry name" value="PRK05015.1"/>
    <property type="match status" value="1"/>
</dbReference>
<dbReference type="PANTHER" id="PTHR11963">
    <property type="entry name" value="LEUCINE AMINOPEPTIDASE-RELATED"/>
    <property type="match status" value="1"/>
</dbReference>
<dbReference type="PANTHER" id="PTHR11963:SF20">
    <property type="entry name" value="PEPTIDASE B"/>
    <property type="match status" value="1"/>
</dbReference>
<dbReference type="Pfam" id="PF12404">
    <property type="entry name" value="DUF3663"/>
    <property type="match status" value="1"/>
</dbReference>
<dbReference type="Pfam" id="PF00883">
    <property type="entry name" value="Peptidase_M17"/>
    <property type="match status" value="1"/>
</dbReference>
<dbReference type="PIRSF" id="PIRSF036388">
    <property type="entry name" value="Ctsl_amnpptdse_B"/>
    <property type="match status" value="1"/>
</dbReference>
<dbReference type="PRINTS" id="PR00481">
    <property type="entry name" value="LAMNOPPTDASE"/>
</dbReference>
<dbReference type="SUPFAM" id="SSF53187">
    <property type="entry name" value="Zn-dependent exopeptidases"/>
    <property type="match status" value="1"/>
</dbReference>
<dbReference type="PROSITE" id="PS00631">
    <property type="entry name" value="CYTOSOL_AP"/>
    <property type="match status" value="1"/>
</dbReference>
<name>PEPB_SALPC</name>
<evidence type="ECO:0000255" key="1">
    <source>
        <dbReference type="HAMAP-Rule" id="MF_00504"/>
    </source>
</evidence>
<comment type="function">
    <text evidence="1">Probably plays an important role in intracellular peptide degradation.</text>
</comment>
<comment type="catalytic activity">
    <reaction evidence="1">
        <text>Release of an N-terminal amino acid, Xaa, from a peptide or arylamide. Xaa is preferably Glu or Asp but may be other amino acids, including Leu, Met, His, Cys and Gln.</text>
        <dbReference type="EC" id="3.4.11.23"/>
    </reaction>
</comment>
<comment type="cofactor">
    <cofactor evidence="1">
        <name>Mn(2+)</name>
        <dbReference type="ChEBI" id="CHEBI:29035"/>
    </cofactor>
    <text evidence="1">Binds 2 manganese ions per subunit.</text>
</comment>
<comment type="subunit">
    <text evidence="1">Homohexamer.</text>
</comment>
<comment type="subcellular location">
    <subcellularLocation>
        <location evidence="1">Cytoplasm</location>
    </subcellularLocation>
</comment>
<comment type="similarity">
    <text evidence="1">Belongs to the peptidase M17 family.</text>
</comment>
<keyword id="KW-0031">Aminopeptidase</keyword>
<keyword id="KW-0963">Cytoplasm</keyword>
<keyword id="KW-0378">Hydrolase</keyword>
<keyword id="KW-0464">Manganese</keyword>
<keyword id="KW-0479">Metal-binding</keyword>
<keyword id="KW-0645">Protease</keyword>
<gene>
    <name evidence="1" type="primary">pepB</name>
    <name type="ordered locus">SPC_1115</name>
</gene>
<feature type="chain" id="PRO_1000192732" description="Peptidase B">
    <location>
        <begin position="1"/>
        <end position="427"/>
    </location>
</feature>
<feature type="active site" evidence="1">
    <location>
        <position position="207"/>
    </location>
</feature>
<feature type="active site" evidence="1">
    <location>
        <position position="281"/>
    </location>
</feature>
<feature type="binding site" evidence="1">
    <location>
        <position position="195"/>
    </location>
    <ligand>
        <name>Mn(2+)</name>
        <dbReference type="ChEBI" id="CHEBI:29035"/>
        <label>2</label>
    </ligand>
</feature>
<feature type="binding site" evidence="1">
    <location>
        <position position="200"/>
    </location>
    <ligand>
        <name>Mn(2+)</name>
        <dbReference type="ChEBI" id="CHEBI:29035"/>
        <label>1</label>
    </ligand>
</feature>
<feature type="binding site" evidence="1">
    <location>
        <position position="200"/>
    </location>
    <ligand>
        <name>Mn(2+)</name>
        <dbReference type="ChEBI" id="CHEBI:29035"/>
        <label>2</label>
    </ligand>
</feature>
<feature type="binding site" evidence="1">
    <location>
        <position position="218"/>
    </location>
    <ligand>
        <name>Mn(2+)</name>
        <dbReference type="ChEBI" id="CHEBI:29035"/>
        <label>2</label>
    </ligand>
</feature>
<feature type="binding site" evidence="1">
    <location>
        <position position="277"/>
    </location>
    <ligand>
        <name>Mn(2+)</name>
        <dbReference type="ChEBI" id="CHEBI:29035"/>
        <label>1</label>
    </ligand>
</feature>
<feature type="binding site" evidence="1">
    <location>
        <position position="279"/>
    </location>
    <ligand>
        <name>Mn(2+)</name>
        <dbReference type="ChEBI" id="CHEBI:29035"/>
        <label>1</label>
    </ligand>
</feature>
<feature type="binding site" evidence="1">
    <location>
        <position position="279"/>
    </location>
    <ligand>
        <name>Mn(2+)</name>
        <dbReference type="ChEBI" id="CHEBI:29035"/>
        <label>2</label>
    </ligand>
</feature>
<proteinExistence type="inferred from homology"/>
<protein>
    <recommendedName>
        <fullName evidence="1">Peptidase B</fullName>
        <ecNumber evidence="1">3.4.11.23</ecNumber>
    </recommendedName>
    <alternativeName>
        <fullName evidence="1">Aminopeptidase B</fullName>
    </alternativeName>
</protein>